<protein>
    <recommendedName>
        <fullName>Electron transfer flavoprotein beta subunit lysine methyltransferase</fullName>
        <ecNumber evidence="1 2">2.1.1.-</ecNumber>
    </recommendedName>
    <alternativeName>
        <fullName>ETFB lysine methyltransferase</fullName>
        <shortName>ETFB-KMT</shortName>
    </alternativeName>
    <alternativeName>
        <fullName>Protein N-lysine methyltransferase METTL20</fullName>
    </alternativeName>
</protein>
<feature type="transit peptide" description="Mitochondrion" evidence="2">
    <location>
        <begin position="1"/>
        <end position="32"/>
    </location>
</feature>
<feature type="chain" id="PRO_0000318711" description="Electron transfer flavoprotein beta subunit lysine methyltransferase">
    <location>
        <begin position="33"/>
        <end position="255"/>
    </location>
</feature>
<proteinExistence type="evidence at transcript level"/>
<organism>
    <name type="scientific">Rattus norvegicus</name>
    <name type="common">Rat</name>
    <dbReference type="NCBI Taxonomy" id="10116"/>
    <lineage>
        <taxon>Eukaryota</taxon>
        <taxon>Metazoa</taxon>
        <taxon>Chordata</taxon>
        <taxon>Craniata</taxon>
        <taxon>Vertebrata</taxon>
        <taxon>Euteleostomi</taxon>
        <taxon>Mammalia</taxon>
        <taxon>Eutheria</taxon>
        <taxon>Euarchontoglires</taxon>
        <taxon>Glires</taxon>
        <taxon>Rodentia</taxon>
        <taxon>Myomorpha</taxon>
        <taxon>Muroidea</taxon>
        <taxon>Muridae</taxon>
        <taxon>Murinae</taxon>
        <taxon>Rattus</taxon>
    </lineage>
</organism>
<accession>Q6P7Q0</accession>
<reference key="1">
    <citation type="journal article" date="2004" name="Genome Res.">
        <title>The status, quality, and expansion of the NIH full-length cDNA project: the Mammalian Gene Collection (MGC).</title>
        <authorList>
            <consortium name="The MGC Project Team"/>
        </authorList>
    </citation>
    <scope>NUCLEOTIDE SEQUENCE [LARGE SCALE MRNA]</scope>
    <source>
        <tissue>Pituitary</tissue>
    </source>
</reference>
<dbReference type="EC" id="2.1.1.-" evidence="1 2"/>
<dbReference type="EMBL" id="BC061574">
    <property type="protein sequence ID" value="AAH61574.1"/>
    <property type="molecule type" value="mRNA"/>
</dbReference>
<dbReference type="RefSeq" id="NP_942067.1">
    <property type="nucleotide sequence ID" value="NM_198772.2"/>
</dbReference>
<dbReference type="RefSeq" id="XP_006237763.1">
    <property type="nucleotide sequence ID" value="XM_006237701.5"/>
</dbReference>
<dbReference type="RefSeq" id="XP_038963650.1">
    <property type="nucleotide sequence ID" value="XM_039107722.2"/>
</dbReference>
<dbReference type="SMR" id="Q6P7Q0"/>
<dbReference type="FunCoup" id="Q6P7Q0">
    <property type="interactions" value="24"/>
</dbReference>
<dbReference type="STRING" id="10116.ENSRNOP00000052309"/>
<dbReference type="PhosphoSitePlus" id="Q6P7Q0"/>
<dbReference type="PaxDb" id="10116-ENSRNOP00000052309"/>
<dbReference type="Ensembl" id="ENSRNOT00000055442.3">
    <property type="protein sequence ID" value="ENSRNOP00000052309.2"/>
    <property type="gene ID" value="ENSRNOG00000036918.3"/>
</dbReference>
<dbReference type="GeneID" id="316976"/>
<dbReference type="KEGG" id="rno:316976"/>
<dbReference type="UCSC" id="RGD:735147">
    <property type="organism name" value="rat"/>
</dbReference>
<dbReference type="AGR" id="RGD:735147"/>
<dbReference type="CTD" id="254013"/>
<dbReference type="RGD" id="735147">
    <property type="gene designation" value="Etfbkmt"/>
</dbReference>
<dbReference type="eggNOG" id="ENOG502QUSY">
    <property type="taxonomic scope" value="Eukaryota"/>
</dbReference>
<dbReference type="GeneTree" id="ENSGT00940000162982"/>
<dbReference type="HOGENOM" id="CLU_074455_2_1_1"/>
<dbReference type="InParanoid" id="Q6P7Q0"/>
<dbReference type="OMA" id="RQENYGL"/>
<dbReference type="OrthoDB" id="194386at2759"/>
<dbReference type="PhylomeDB" id="Q6P7Q0"/>
<dbReference type="TreeFam" id="TF314934"/>
<dbReference type="Reactome" id="R-RNO-8876725">
    <property type="pathway name" value="Protein methylation"/>
</dbReference>
<dbReference type="PRO" id="PR:Q6P7Q0"/>
<dbReference type="Proteomes" id="UP000002494">
    <property type="component" value="Chromosome 4"/>
</dbReference>
<dbReference type="Bgee" id="ENSRNOG00000036918">
    <property type="expression patterns" value="Expressed in heart and 19 other cell types or tissues"/>
</dbReference>
<dbReference type="GO" id="GO:0005737">
    <property type="term" value="C:cytoplasm"/>
    <property type="evidence" value="ECO:0000266"/>
    <property type="project" value="RGD"/>
</dbReference>
<dbReference type="GO" id="GO:0005759">
    <property type="term" value="C:mitochondrial matrix"/>
    <property type="evidence" value="ECO:0000250"/>
    <property type="project" value="UniProtKB"/>
</dbReference>
<dbReference type="GO" id="GO:0032991">
    <property type="term" value="C:protein-containing complex"/>
    <property type="evidence" value="ECO:0000266"/>
    <property type="project" value="RGD"/>
</dbReference>
<dbReference type="GO" id="GO:0031072">
    <property type="term" value="F:heat shock protein binding"/>
    <property type="evidence" value="ECO:0000266"/>
    <property type="project" value="RGD"/>
</dbReference>
<dbReference type="GO" id="GO:0016279">
    <property type="term" value="F:protein-lysine N-methyltransferase activity"/>
    <property type="evidence" value="ECO:0000250"/>
    <property type="project" value="UniProtKB"/>
</dbReference>
<dbReference type="GO" id="GO:0032259">
    <property type="term" value="P:methylation"/>
    <property type="evidence" value="ECO:0007669"/>
    <property type="project" value="UniProtKB-KW"/>
</dbReference>
<dbReference type="GO" id="GO:1904736">
    <property type="term" value="P:negative regulation of fatty acid beta-oxidation using acyl-CoA dehydrogenase"/>
    <property type="evidence" value="ECO:0000250"/>
    <property type="project" value="UniProtKB"/>
</dbReference>
<dbReference type="CDD" id="cd02440">
    <property type="entry name" value="AdoMet_MTases"/>
    <property type="match status" value="1"/>
</dbReference>
<dbReference type="FunFam" id="3.40.50.150:FF:000202">
    <property type="entry name" value="Electron transfer flavoprotein subunit beta lysine methyltransferase"/>
    <property type="match status" value="1"/>
</dbReference>
<dbReference type="Gene3D" id="3.40.50.150">
    <property type="entry name" value="Vaccinia Virus protein VP39"/>
    <property type="match status" value="1"/>
</dbReference>
<dbReference type="InterPro" id="IPR050078">
    <property type="entry name" value="Ribosomal_L11_MeTrfase_PrmA"/>
</dbReference>
<dbReference type="InterPro" id="IPR029063">
    <property type="entry name" value="SAM-dependent_MTases_sf"/>
</dbReference>
<dbReference type="PANTHER" id="PTHR43648">
    <property type="entry name" value="ELECTRON TRANSFER FLAVOPROTEIN BETA SUBUNIT LYSINE METHYLTRANSFERASE"/>
    <property type="match status" value="1"/>
</dbReference>
<dbReference type="PANTHER" id="PTHR43648:SF1">
    <property type="entry name" value="ELECTRON TRANSFER FLAVOPROTEIN BETA SUBUNIT LYSINE METHYLTRANSFERASE"/>
    <property type="match status" value="1"/>
</dbReference>
<dbReference type="Pfam" id="PF06325">
    <property type="entry name" value="PrmA"/>
    <property type="match status" value="1"/>
</dbReference>
<dbReference type="SUPFAM" id="SSF53335">
    <property type="entry name" value="S-adenosyl-L-methionine-dependent methyltransferases"/>
    <property type="match status" value="1"/>
</dbReference>
<sequence>MAFSLCWKAPRSQWSFLQALNSGFPLFPWRTVGSCLDLKMKAYLEENTEVTSSGSLTPEIQLRLLTPRCKFWWERADLWPYSDPYWAIYWPGGQALSRYLLDNPDVVRGKSVLDLGSGCGATAIAAKMSGASNILANDVDPIAGMAITLNCKLNGLNPFPILTKNILNTRQGKFDLIVLGDMFYDEDLADSLHLWLQNCFWAYGTRVLIGDPGRPQFSGHSIQHQLYQLAEYTLPEPTQQDNNGLTTSAVWDFHP</sequence>
<keyword id="KW-0963">Cytoplasm</keyword>
<keyword id="KW-0489">Methyltransferase</keyword>
<keyword id="KW-0496">Mitochondrion</keyword>
<keyword id="KW-1185">Reference proteome</keyword>
<keyword id="KW-0808">Transferase</keyword>
<keyword id="KW-0809">Transit peptide</keyword>
<name>ETKMT_RAT</name>
<evidence type="ECO:0000250" key="1">
    <source>
        <dbReference type="UniProtKB" id="Q80ZM3"/>
    </source>
</evidence>
<evidence type="ECO:0000250" key="2">
    <source>
        <dbReference type="UniProtKB" id="Q8IXQ9"/>
    </source>
</evidence>
<evidence type="ECO:0000305" key="3"/>
<evidence type="ECO:0000312" key="4">
    <source>
        <dbReference type="RGD" id="735147"/>
    </source>
</evidence>
<comment type="function">
    <text evidence="2">Protein-lysine methyltransferase that selectively trimethylates the flavoprotein ETFB in mitochondria. Thereby, may negatively regulate the function of ETFB in electron transfer from Acyl-CoA dehydrogenases to the main respiratory chain.</text>
</comment>
<comment type="catalytic activity">
    <reaction evidence="2">
        <text>L-lysyl-[protein] + 3 S-adenosyl-L-methionine = N(6),N(6),N(6)-trimethyl-L-lysyl-[protein] + 3 S-adenosyl-L-homocysteine + 3 H(+)</text>
        <dbReference type="Rhea" id="RHEA:54192"/>
        <dbReference type="Rhea" id="RHEA-COMP:9752"/>
        <dbReference type="Rhea" id="RHEA-COMP:13826"/>
        <dbReference type="ChEBI" id="CHEBI:15378"/>
        <dbReference type="ChEBI" id="CHEBI:29969"/>
        <dbReference type="ChEBI" id="CHEBI:57856"/>
        <dbReference type="ChEBI" id="CHEBI:59789"/>
        <dbReference type="ChEBI" id="CHEBI:61961"/>
    </reaction>
    <physiologicalReaction direction="left-to-right" evidence="2">
        <dbReference type="Rhea" id="RHEA:54193"/>
    </physiologicalReaction>
</comment>
<comment type="subunit">
    <text evidence="2">Interacts with HSPD1; this protein may possibly be a methylation substrate.</text>
</comment>
<comment type="subcellular location">
    <subcellularLocation>
        <location evidence="2">Cytoplasm</location>
    </subcellularLocation>
    <subcellularLocation>
        <location evidence="2">Mitochondrion matrix</location>
    </subcellularLocation>
    <text evidence="2">Concentrated in cytoplasmic granular foci.</text>
</comment>
<comment type="similarity">
    <text evidence="3">Belongs to the methyltransferase superfamily. ETFBKMT family.</text>
</comment>
<gene>
    <name evidence="4" type="primary">Etfbkmt</name>
    <name type="synonym">Mettl20</name>
</gene>